<feature type="chain" id="PRO_0000419516" description="Cytochrome P450 98A8">
    <location>
        <begin position="1"/>
        <end position="497"/>
    </location>
</feature>
<feature type="transmembrane region" description="Helical" evidence="2">
    <location>
        <begin position="2"/>
        <end position="19"/>
    </location>
</feature>
<feature type="binding site" description="axial binding residue" evidence="1">
    <location>
        <position position="431"/>
    </location>
    <ligand>
        <name>heme</name>
        <dbReference type="ChEBI" id="CHEBI:30413"/>
    </ligand>
    <ligandPart>
        <name>Fe</name>
        <dbReference type="ChEBI" id="CHEBI:18248"/>
    </ligandPart>
</feature>
<feature type="sequence conflict" description="In Ref. 4; AAM66087." evidence="6" ref="4">
    <original>G</original>
    <variation>D</variation>
    <location>
        <position position="211"/>
    </location>
</feature>
<accession>Q9CA61</accession>
<accession>A0MEG3</accession>
<accession>Q8L9A4</accession>
<comment type="function">
    <text evidence="3 4 5">Acts redundantly with CYP98A9 as tricoumaroylspermidine meta-hydroxylase. Also catalyzes the meta-hydroxylation of the three triferuloylspermidine phenolic rings. Unable to use 5-O-(4-coumaroyl) D-quinate or 5-O-(4-coumaroyl) shikimate as substrates.</text>
</comment>
<comment type="cofactor">
    <cofactor evidence="1">
        <name>heme</name>
        <dbReference type="ChEBI" id="CHEBI:30413"/>
    </cofactor>
</comment>
<comment type="subcellular location">
    <subcellularLocation>
        <location evidence="6">Membrane</location>
        <topology evidence="6">Single-pass membrane protein</topology>
    </subcellularLocation>
</comment>
<comment type="tissue specificity">
    <text evidence="4 5">Strongly expressed in inflorescence tips, young flower buds, seeds, stamen, tapetum and pollen.</text>
</comment>
<comment type="disruption phenotype">
    <text evidence="4">Drastic reduction in flower buds of the content in N1,N5,N10-tri-(hydroxyferuloyl)-spermidine and N1,N5-di(hydroxyferuloyl)-N10-sinapoyl-spermidine.</text>
</comment>
<comment type="similarity">
    <text evidence="6">Belongs to the cytochrome P450 family.</text>
</comment>
<comment type="sequence caution" evidence="6">
    <conflict type="erroneous termination">
        <sequence resource="EMBL-CDS" id="ABK28467"/>
    </conflict>
    <text>Extended C-terminus.</text>
</comment>
<keyword id="KW-0349">Heme</keyword>
<keyword id="KW-0408">Iron</keyword>
<keyword id="KW-0472">Membrane</keyword>
<keyword id="KW-0479">Metal-binding</keyword>
<keyword id="KW-0503">Monooxygenase</keyword>
<keyword id="KW-0560">Oxidoreductase</keyword>
<keyword id="KW-1185">Reference proteome</keyword>
<keyword id="KW-0812">Transmembrane</keyword>
<keyword id="KW-1133">Transmembrane helix</keyword>
<evidence type="ECO:0000250" key="1"/>
<evidence type="ECO:0000255" key="2"/>
<evidence type="ECO:0000269" key="3">
    <source>
    </source>
</evidence>
<evidence type="ECO:0000269" key="4">
    <source>
    </source>
</evidence>
<evidence type="ECO:0000269" key="5">
    <source>
    </source>
</evidence>
<evidence type="ECO:0000305" key="6"/>
<sequence>MIIYLISLLPIIVATLMLYQRWWRSNIPPGPKPKFLLGNLHQMKPLWTHSFSEWSETYGPIISVWIGSQLTVVVSSSDLARQVLRDKDHQLSNRHRIARMTQTGTDLVWSDYSPHYVKLRKLCTLELFSLKSIENFRSLREMEARSMVVSILKDLMSNSGDDQERKPVIVRKYLAAVVLNTISRLMIGKEFGSEEGKEFKAIVEKEHLLSGSGTILDHVWWLKWVSSWFFSDKEFLAHKDRRTKWFRGAIMVEEDIEIEDHRGFVRKLLVLKEQKELSEETVGGLVWNMLTAGADTTAVVIEWAMAEMIKCPTVQEKAQQELDSVVGSERLMTESDIPILPYLQCVVKEALRLHPSTPLMLPHKASETVWVGGYKVPKGATVYVNVQAIGRDPANWINPYEFRPERFLQEETDVKGRDFRVLPFGSGRRMCPAAQLSMNLMTLVMGNLLHCFSWSSPVPGERIDMSENPGLLCNMRTPLQALALPRAAARAIPLPLD</sequence>
<dbReference type="EC" id="1.14.-.-"/>
<dbReference type="EMBL" id="AC011765">
    <property type="protein sequence ID" value="AAG52369.1"/>
    <property type="molecule type" value="Genomic_DNA"/>
</dbReference>
<dbReference type="EMBL" id="CP002684">
    <property type="protein sequence ID" value="AEE35607.1"/>
    <property type="molecule type" value="Genomic_DNA"/>
</dbReference>
<dbReference type="EMBL" id="DQ446429">
    <property type="protein sequence ID" value="ABE65772.1"/>
    <property type="molecule type" value="mRNA"/>
</dbReference>
<dbReference type="EMBL" id="DQ652933">
    <property type="protein sequence ID" value="ABK28467.1"/>
    <property type="status" value="ALT_SEQ"/>
    <property type="molecule type" value="mRNA"/>
</dbReference>
<dbReference type="EMBL" id="AY088555">
    <property type="protein sequence ID" value="AAM66087.1"/>
    <property type="molecule type" value="mRNA"/>
</dbReference>
<dbReference type="PIR" id="E96774">
    <property type="entry name" value="E96774"/>
</dbReference>
<dbReference type="RefSeq" id="NP_177594.1">
    <property type="nucleotide sequence ID" value="NM_106114.2"/>
</dbReference>
<dbReference type="SMR" id="Q9CA61"/>
<dbReference type="FunCoup" id="Q9CA61">
    <property type="interactions" value="316"/>
</dbReference>
<dbReference type="STRING" id="3702.Q9CA61"/>
<dbReference type="iPTMnet" id="Q9CA61"/>
<dbReference type="PaxDb" id="3702-AT1G74540.1"/>
<dbReference type="ProteomicsDB" id="223860"/>
<dbReference type="EnsemblPlants" id="AT1G74540.1">
    <property type="protein sequence ID" value="AT1G74540.1"/>
    <property type="gene ID" value="AT1G74540"/>
</dbReference>
<dbReference type="GeneID" id="843795"/>
<dbReference type="Gramene" id="AT1G74540.1">
    <property type="protein sequence ID" value="AT1G74540.1"/>
    <property type="gene ID" value="AT1G74540"/>
</dbReference>
<dbReference type="KEGG" id="ath:AT1G74540"/>
<dbReference type="Araport" id="AT1G74540"/>
<dbReference type="TAIR" id="AT1G74540">
    <property type="gene designation" value="CYP98A8"/>
</dbReference>
<dbReference type="eggNOG" id="KOG0156">
    <property type="taxonomic scope" value="Eukaryota"/>
</dbReference>
<dbReference type="HOGENOM" id="CLU_001570_4_0_1"/>
<dbReference type="InParanoid" id="Q9CA61"/>
<dbReference type="OMA" id="MAEMIKC"/>
<dbReference type="OrthoDB" id="2789670at2759"/>
<dbReference type="PhylomeDB" id="Q9CA61"/>
<dbReference type="BioCyc" id="ARA:AT1G74540-MONOMER"/>
<dbReference type="BioCyc" id="MetaCyc:AT1G74540-MONOMER"/>
<dbReference type="PRO" id="PR:Q9CA61"/>
<dbReference type="Proteomes" id="UP000006548">
    <property type="component" value="Chromosome 1"/>
</dbReference>
<dbReference type="ExpressionAtlas" id="Q9CA61">
    <property type="expression patterns" value="baseline and differential"/>
</dbReference>
<dbReference type="GO" id="GO:0016020">
    <property type="term" value="C:membrane"/>
    <property type="evidence" value="ECO:0007669"/>
    <property type="project" value="UniProtKB-SubCell"/>
</dbReference>
<dbReference type="GO" id="GO:0072548">
    <property type="term" value="F:dicoumaroyl monocaffeoyl spermidine meta-hydroxylase activity"/>
    <property type="evidence" value="ECO:0000314"/>
    <property type="project" value="TAIR"/>
</dbReference>
<dbReference type="GO" id="GO:0072551">
    <property type="term" value="F:diferuloyl mono-(hydroxyferuloyl) spermidine meta-hydroxylase activity"/>
    <property type="evidence" value="ECO:0000315"/>
    <property type="project" value="TAIR"/>
</dbReference>
<dbReference type="GO" id="GO:0020037">
    <property type="term" value="F:heme binding"/>
    <property type="evidence" value="ECO:0007669"/>
    <property type="project" value="InterPro"/>
</dbReference>
<dbReference type="GO" id="GO:0005506">
    <property type="term" value="F:iron ion binding"/>
    <property type="evidence" value="ECO:0007669"/>
    <property type="project" value="InterPro"/>
</dbReference>
<dbReference type="GO" id="GO:0072549">
    <property type="term" value="F:monocoumaroyl dicaffeoyl spermidine meta-hydroxylase activity"/>
    <property type="evidence" value="ECO:0000314"/>
    <property type="project" value="TAIR"/>
</dbReference>
<dbReference type="GO" id="GO:0072552">
    <property type="term" value="F:monoferuloyl di-(hydroxyferuloyl) spermidine meta-hydroxylase activity"/>
    <property type="evidence" value="ECO:0000315"/>
    <property type="project" value="TAIR"/>
</dbReference>
<dbReference type="GO" id="GO:0072532">
    <property type="term" value="F:tri-(feruloyl or hydroxyferuloyl) spermidine meta-hydroxylase activity"/>
    <property type="evidence" value="ECO:0000314"/>
    <property type="project" value="TAIR"/>
</dbReference>
<dbReference type="GO" id="GO:0072547">
    <property type="term" value="F:tricoumaroylspermidine meta-hydroxylase activity"/>
    <property type="evidence" value="ECO:0000314"/>
    <property type="project" value="TAIR"/>
</dbReference>
<dbReference type="GO" id="GO:0072550">
    <property type="term" value="F:triferuloylspermidine meta-hydroxylase activity"/>
    <property type="evidence" value="ECO:0000315"/>
    <property type="project" value="TAIR"/>
</dbReference>
<dbReference type="GO" id="GO:0080088">
    <property type="term" value="P:spermidine hydroxycinnamate conjugate biosynthetic process"/>
    <property type="evidence" value="ECO:0000314"/>
    <property type="project" value="TAIR"/>
</dbReference>
<dbReference type="GO" id="GO:0008216">
    <property type="term" value="P:spermidine metabolic process"/>
    <property type="evidence" value="ECO:0000315"/>
    <property type="project" value="TAIR"/>
</dbReference>
<dbReference type="CDD" id="cd20656">
    <property type="entry name" value="CYP98"/>
    <property type="match status" value="1"/>
</dbReference>
<dbReference type="FunFam" id="1.10.630.10:FF:000039">
    <property type="entry name" value="Cytochrome P450"/>
    <property type="match status" value="1"/>
</dbReference>
<dbReference type="Gene3D" id="1.10.630.10">
    <property type="entry name" value="Cytochrome P450"/>
    <property type="match status" value="1"/>
</dbReference>
<dbReference type="InterPro" id="IPR001128">
    <property type="entry name" value="Cyt_P450"/>
</dbReference>
<dbReference type="InterPro" id="IPR017972">
    <property type="entry name" value="Cyt_P450_CS"/>
</dbReference>
<dbReference type="InterPro" id="IPR002401">
    <property type="entry name" value="Cyt_P450_E_grp-I"/>
</dbReference>
<dbReference type="InterPro" id="IPR036396">
    <property type="entry name" value="Cyt_P450_sf"/>
</dbReference>
<dbReference type="PANTHER" id="PTHR47944">
    <property type="entry name" value="CYTOCHROME P450 98A9"/>
    <property type="match status" value="1"/>
</dbReference>
<dbReference type="PANTHER" id="PTHR47944:SF10">
    <property type="entry name" value="CYTOCHROME P450 98A9"/>
    <property type="match status" value="1"/>
</dbReference>
<dbReference type="Pfam" id="PF00067">
    <property type="entry name" value="p450"/>
    <property type="match status" value="1"/>
</dbReference>
<dbReference type="PRINTS" id="PR00463">
    <property type="entry name" value="EP450I"/>
</dbReference>
<dbReference type="PRINTS" id="PR00385">
    <property type="entry name" value="P450"/>
</dbReference>
<dbReference type="SUPFAM" id="SSF48264">
    <property type="entry name" value="Cytochrome P450"/>
    <property type="match status" value="1"/>
</dbReference>
<dbReference type="PROSITE" id="PS00086">
    <property type="entry name" value="CYTOCHROME_P450"/>
    <property type="match status" value="1"/>
</dbReference>
<organism>
    <name type="scientific">Arabidopsis thaliana</name>
    <name type="common">Mouse-ear cress</name>
    <dbReference type="NCBI Taxonomy" id="3702"/>
    <lineage>
        <taxon>Eukaryota</taxon>
        <taxon>Viridiplantae</taxon>
        <taxon>Streptophyta</taxon>
        <taxon>Embryophyta</taxon>
        <taxon>Tracheophyta</taxon>
        <taxon>Spermatophyta</taxon>
        <taxon>Magnoliopsida</taxon>
        <taxon>eudicotyledons</taxon>
        <taxon>Gunneridae</taxon>
        <taxon>Pentapetalae</taxon>
        <taxon>rosids</taxon>
        <taxon>malvids</taxon>
        <taxon>Brassicales</taxon>
        <taxon>Brassicaceae</taxon>
        <taxon>Camelineae</taxon>
        <taxon>Arabidopsis</taxon>
    </lineage>
</organism>
<name>C98A8_ARATH</name>
<protein>
    <recommendedName>
        <fullName>Cytochrome P450 98A8</fullName>
        <ecNumber>1.14.-.-</ecNumber>
    </recommendedName>
    <alternativeName>
        <fullName>p-coumarate 3-hydroxylase</fullName>
    </alternativeName>
</protein>
<reference key="1">
    <citation type="journal article" date="2000" name="Nature">
        <title>Sequence and analysis of chromosome 1 of the plant Arabidopsis thaliana.</title>
        <authorList>
            <person name="Theologis A."/>
            <person name="Ecker J.R."/>
            <person name="Palm C.J."/>
            <person name="Federspiel N.A."/>
            <person name="Kaul S."/>
            <person name="White O."/>
            <person name="Alonso J."/>
            <person name="Altafi H."/>
            <person name="Araujo R."/>
            <person name="Bowman C.L."/>
            <person name="Brooks S.Y."/>
            <person name="Buehler E."/>
            <person name="Chan A."/>
            <person name="Chao Q."/>
            <person name="Chen H."/>
            <person name="Cheuk R.F."/>
            <person name="Chin C.W."/>
            <person name="Chung M.K."/>
            <person name="Conn L."/>
            <person name="Conway A.B."/>
            <person name="Conway A.R."/>
            <person name="Creasy T.H."/>
            <person name="Dewar K."/>
            <person name="Dunn P."/>
            <person name="Etgu P."/>
            <person name="Feldblyum T.V."/>
            <person name="Feng J.-D."/>
            <person name="Fong B."/>
            <person name="Fujii C.Y."/>
            <person name="Gill J.E."/>
            <person name="Goldsmith A.D."/>
            <person name="Haas B."/>
            <person name="Hansen N.F."/>
            <person name="Hughes B."/>
            <person name="Huizar L."/>
            <person name="Hunter J.L."/>
            <person name="Jenkins J."/>
            <person name="Johnson-Hopson C."/>
            <person name="Khan S."/>
            <person name="Khaykin E."/>
            <person name="Kim C.J."/>
            <person name="Koo H.L."/>
            <person name="Kremenetskaia I."/>
            <person name="Kurtz D.B."/>
            <person name="Kwan A."/>
            <person name="Lam B."/>
            <person name="Langin-Hooper S."/>
            <person name="Lee A."/>
            <person name="Lee J.M."/>
            <person name="Lenz C.A."/>
            <person name="Li J.H."/>
            <person name="Li Y.-P."/>
            <person name="Lin X."/>
            <person name="Liu S.X."/>
            <person name="Liu Z.A."/>
            <person name="Luros J.S."/>
            <person name="Maiti R."/>
            <person name="Marziali A."/>
            <person name="Militscher J."/>
            <person name="Miranda M."/>
            <person name="Nguyen M."/>
            <person name="Nierman W.C."/>
            <person name="Osborne B.I."/>
            <person name="Pai G."/>
            <person name="Peterson J."/>
            <person name="Pham P.K."/>
            <person name="Rizzo M."/>
            <person name="Rooney T."/>
            <person name="Rowley D."/>
            <person name="Sakano H."/>
            <person name="Salzberg S.L."/>
            <person name="Schwartz J.R."/>
            <person name="Shinn P."/>
            <person name="Southwick A.M."/>
            <person name="Sun H."/>
            <person name="Tallon L.J."/>
            <person name="Tambunga G."/>
            <person name="Toriumi M.J."/>
            <person name="Town C.D."/>
            <person name="Utterback T."/>
            <person name="Van Aken S."/>
            <person name="Vaysberg M."/>
            <person name="Vysotskaia V.S."/>
            <person name="Walker M."/>
            <person name="Wu D."/>
            <person name="Yu G."/>
            <person name="Fraser C.M."/>
            <person name="Venter J.C."/>
            <person name="Davis R.W."/>
        </authorList>
    </citation>
    <scope>NUCLEOTIDE SEQUENCE [LARGE SCALE GENOMIC DNA]</scope>
    <source>
        <strain>cv. Columbia</strain>
    </source>
</reference>
<reference key="2">
    <citation type="journal article" date="2017" name="Plant J.">
        <title>Araport11: a complete reannotation of the Arabidopsis thaliana reference genome.</title>
        <authorList>
            <person name="Cheng C.Y."/>
            <person name="Krishnakumar V."/>
            <person name="Chan A.P."/>
            <person name="Thibaud-Nissen F."/>
            <person name="Schobel S."/>
            <person name="Town C.D."/>
        </authorList>
    </citation>
    <scope>GENOME REANNOTATION</scope>
    <source>
        <strain>cv. Columbia</strain>
    </source>
</reference>
<reference key="3">
    <citation type="journal article" date="2006" name="Plant Biotechnol. J.">
        <title>Simultaneous high-throughput recombinational cloning of open reading frames in closed and open configurations.</title>
        <authorList>
            <person name="Underwood B.A."/>
            <person name="Vanderhaeghen R."/>
            <person name="Whitford R."/>
            <person name="Town C.D."/>
            <person name="Hilson P."/>
        </authorList>
    </citation>
    <scope>NUCLEOTIDE SEQUENCE [LARGE SCALE MRNA]</scope>
    <source>
        <strain>cv. Columbia</strain>
    </source>
</reference>
<reference key="4">
    <citation type="submission" date="2002-03" db="EMBL/GenBank/DDBJ databases">
        <title>Full-length cDNA from Arabidopsis thaliana.</title>
        <authorList>
            <person name="Brover V.V."/>
            <person name="Troukhan M.E."/>
            <person name="Alexandrov N.A."/>
            <person name="Lu Y.-P."/>
            <person name="Flavell R.B."/>
            <person name="Feldmann K.A."/>
        </authorList>
    </citation>
    <scope>NUCLEOTIDE SEQUENCE [LARGE SCALE MRNA]</scope>
</reference>
<reference key="5">
    <citation type="journal article" date="2001" name="J. Biol. Chem.">
        <title>CYP98A3 from Arabidopsis thaliana is a 3'-hydroxylase of phenolic esters, a missing link in the phenylpropanoid pathway.</title>
        <authorList>
            <person name="Schoch G."/>
            <person name="Goepfert S."/>
            <person name="Morant M."/>
            <person name="Hehn A."/>
            <person name="Meyer D."/>
            <person name="Ullmann P."/>
            <person name="Werck-Reichhart D."/>
        </authorList>
    </citation>
    <scope>IDENTIFICATION</scope>
    <scope>FUNCTION</scope>
</reference>
<reference key="6">
    <citation type="journal article" date="2009" name="Phytochemistry">
        <title>Phenylpropanoid polyamine conjugate biosynthesis in Arabidopsis thaliana flower buds.</title>
        <authorList>
            <person name="Fellenberg C."/>
            <person name="Boettcher C."/>
            <person name="Vogt T."/>
        </authorList>
    </citation>
    <scope>FUNCTION</scope>
    <scope>TISSUE SPECIFICITY</scope>
    <scope>DISRUPTION PHENOTYPE</scope>
</reference>
<reference key="7">
    <citation type="journal article" date="2009" name="Science">
        <title>Evolution of a novel phenolic pathway for pollen development.</title>
        <authorList>
            <person name="Matsuno M."/>
            <person name="Compagnon V."/>
            <person name="Schoch G.A."/>
            <person name="Schmitt M."/>
            <person name="Debayle D."/>
            <person name="Bassard J.E."/>
            <person name="Pollet B."/>
            <person name="Hehn A."/>
            <person name="Heintz D."/>
            <person name="Ullmann P."/>
            <person name="Lapierre C."/>
            <person name="Bernier F."/>
            <person name="Ehlting J."/>
            <person name="Werck-Reichhart D."/>
        </authorList>
    </citation>
    <scope>FUNCTION</scope>
    <scope>CATALYTIC ACTIVITY</scope>
    <scope>3D-STRUCTURE MODELING</scope>
    <scope>TISSUE SPECIFICITY</scope>
</reference>
<gene>
    <name type="primary">CYP98A8</name>
    <name type="ordered locus">At1g74540</name>
    <name type="ORF">F1M20.22</name>
</gene>
<proteinExistence type="evidence at protein level"/>